<organism>
    <name type="scientific">Escherichia coli (strain K12)</name>
    <dbReference type="NCBI Taxonomy" id="83333"/>
    <lineage>
        <taxon>Bacteria</taxon>
        <taxon>Pseudomonadati</taxon>
        <taxon>Pseudomonadota</taxon>
        <taxon>Gammaproteobacteria</taxon>
        <taxon>Enterobacterales</taxon>
        <taxon>Enterobacteriaceae</taxon>
        <taxon>Escherichia</taxon>
    </lineage>
</organism>
<protein>
    <recommendedName>
        <fullName>Uncharacterized protein YdiE</fullName>
    </recommendedName>
</protein>
<name>YDIE_ECOLI</name>
<feature type="chain" id="PRO_0000168988" description="Uncharacterized protein YdiE">
    <location>
        <begin position="1"/>
        <end position="63"/>
    </location>
</feature>
<feature type="region of interest" description="Disordered" evidence="1">
    <location>
        <begin position="1"/>
        <end position="32"/>
    </location>
</feature>
<feature type="compositionally biased region" description="Basic and acidic residues" evidence="1">
    <location>
        <begin position="1"/>
        <end position="17"/>
    </location>
</feature>
<feature type="compositionally biased region" description="Polar residues" evidence="1">
    <location>
        <begin position="18"/>
        <end position="32"/>
    </location>
</feature>
<feature type="strand" evidence="3">
    <location>
        <begin position="27"/>
        <end position="29"/>
    </location>
</feature>
<feature type="helix" evidence="3">
    <location>
        <begin position="30"/>
        <end position="34"/>
    </location>
</feature>
<feature type="turn" evidence="3">
    <location>
        <begin position="35"/>
        <end position="38"/>
    </location>
</feature>
<feature type="strand" evidence="3">
    <location>
        <begin position="39"/>
        <end position="44"/>
    </location>
</feature>
<feature type="strand" evidence="3">
    <location>
        <begin position="47"/>
        <end position="53"/>
    </location>
</feature>
<feature type="strand" evidence="3">
    <location>
        <begin position="59"/>
        <end position="62"/>
    </location>
</feature>
<comment type="similarity">
    <text evidence="2">To Y.enterocolitica HemP.</text>
</comment>
<evidence type="ECO:0000256" key="1">
    <source>
        <dbReference type="SAM" id="MobiDB-lite"/>
    </source>
</evidence>
<evidence type="ECO:0000305" key="2"/>
<evidence type="ECO:0007829" key="3">
    <source>
        <dbReference type="PDB" id="4YNX"/>
    </source>
</evidence>
<keyword id="KW-0002">3D-structure</keyword>
<keyword id="KW-1185">Reference proteome</keyword>
<proteinExistence type="evidence at protein level"/>
<gene>
    <name type="primary">ydiE</name>
    <name type="ordered locus">b1705</name>
    <name type="ordered locus">JW1695</name>
</gene>
<accession>P0ACX9</accession>
<accession>P40721</accession>
<reference key="1">
    <citation type="journal article" date="1991" name="Gene">
        <title>Two promoters control the aroH gene of Escherichia coli.</title>
        <authorList>
            <person name="Hudson G.S."/>
            <person name="Rellos P."/>
            <person name="Davidson B.E."/>
        </authorList>
    </citation>
    <scope>NUCLEOTIDE SEQUENCE [GENOMIC DNA]</scope>
</reference>
<reference key="2">
    <citation type="journal article" date="1996" name="DNA Res.">
        <title>A 570-kb DNA sequence of the Escherichia coli K-12 genome corresponding to the 28.0-40.1 min region on the linkage map.</title>
        <authorList>
            <person name="Aiba H."/>
            <person name="Baba T."/>
            <person name="Fujita K."/>
            <person name="Hayashi K."/>
            <person name="Inada T."/>
            <person name="Isono K."/>
            <person name="Itoh T."/>
            <person name="Kasai H."/>
            <person name="Kashimoto K."/>
            <person name="Kimura S."/>
            <person name="Kitakawa M."/>
            <person name="Kitagawa M."/>
            <person name="Makino K."/>
            <person name="Miki T."/>
            <person name="Mizobuchi K."/>
            <person name="Mori H."/>
            <person name="Mori T."/>
            <person name="Motomura K."/>
            <person name="Nakade S."/>
            <person name="Nakamura Y."/>
            <person name="Nashimoto H."/>
            <person name="Nishio Y."/>
            <person name="Oshima T."/>
            <person name="Saito N."/>
            <person name="Sampei G."/>
            <person name="Seki Y."/>
            <person name="Sivasundaram S."/>
            <person name="Tagami H."/>
            <person name="Takeda J."/>
            <person name="Takemoto K."/>
            <person name="Takeuchi Y."/>
            <person name="Wada C."/>
            <person name="Yamamoto Y."/>
            <person name="Horiuchi T."/>
        </authorList>
    </citation>
    <scope>NUCLEOTIDE SEQUENCE [LARGE SCALE GENOMIC DNA]</scope>
    <source>
        <strain>K12 / W3110 / ATCC 27325 / DSM 5911</strain>
    </source>
</reference>
<reference key="3">
    <citation type="journal article" date="1997" name="Science">
        <title>The complete genome sequence of Escherichia coli K-12.</title>
        <authorList>
            <person name="Blattner F.R."/>
            <person name="Plunkett G. III"/>
            <person name="Bloch C.A."/>
            <person name="Perna N.T."/>
            <person name="Burland V."/>
            <person name="Riley M."/>
            <person name="Collado-Vides J."/>
            <person name="Glasner J.D."/>
            <person name="Rode C.K."/>
            <person name="Mayhew G.F."/>
            <person name="Gregor J."/>
            <person name="Davis N.W."/>
            <person name="Kirkpatrick H.A."/>
            <person name="Goeden M.A."/>
            <person name="Rose D.J."/>
            <person name="Mau B."/>
            <person name="Shao Y."/>
        </authorList>
    </citation>
    <scope>NUCLEOTIDE SEQUENCE [LARGE SCALE GENOMIC DNA]</scope>
    <source>
        <strain>K12 / MG1655 / ATCC 47076</strain>
    </source>
</reference>
<reference key="4">
    <citation type="journal article" date="2006" name="Mol. Syst. Biol.">
        <title>Highly accurate genome sequences of Escherichia coli K-12 strains MG1655 and W3110.</title>
        <authorList>
            <person name="Hayashi K."/>
            <person name="Morooka N."/>
            <person name="Yamamoto Y."/>
            <person name="Fujita K."/>
            <person name="Isono K."/>
            <person name="Choi S."/>
            <person name="Ohtsubo E."/>
            <person name="Baba T."/>
            <person name="Wanner B.L."/>
            <person name="Mori H."/>
            <person name="Horiuchi T."/>
        </authorList>
    </citation>
    <scope>NUCLEOTIDE SEQUENCE [LARGE SCALE GENOMIC DNA]</scope>
    <source>
        <strain>K12 / W3110 / ATCC 27325 / DSM 5911</strain>
    </source>
</reference>
<reference key="5">
    <citation type="journal article" date="1994" name="Nucleic Acids Res.">
        <title>Intrinsic and extrinsic approaches for detecting genes in a bacterial genome.</title>
        <authorList>
            <person name="Borodovsky M."/>
            <person name="Rudd K.E."/>
            <person name="Koonin E.V."/>
        </authorList>
    </citation>
    <scope>IDENTIFICATION</scope>
</reference>
<dbReference type="EMBL" id="M38266">
    <property type="status" value="NOT_ANNOTATED_CDS"/>
    <property type="molecule type" value="Genomic_DNA"/>
</dbReference>
<dbReference type="EMBL" id="U00096">
    <property type="protein sequence ID" value="AAC74775.1"/>
    <property type="molecule type" value="Genomic_DNA"/>
</dbReference>
<dbReference type="EMBL" id="AP009048">
    <property type="protein sequence ID" value="BAA15474.1"/>
    <property type="molecule type" value="Genomic_DNA"/>
</dbReference>
<dbReference type="PIR" id="A64929">
    <property type="entry name" value="A64929"/>
</dbReference>
<dbReference type="RefSeq" id="NP_416220.1">
    <property type="nucleotide sequence ID" value="NC_000913.3"/>
</dbReference>
<dbReference type="PDB" id="4YNX">
    <property type="method" value="X-ray"/>
    <property type="resolution" value="1.50 A"/>
    <property type="chains" value="A/B=1-63"/>
</dbReference>
<dbReference type="PDBsum" id="4YNX"/>
<dbReference type="SMR" id="P0ACX9"/>
<dbReference type="BioGRID" id="4260297">
    <property type="interactions" value="29"/>
</dbReference>
<dbReference type="BioGRID" id="850565">
    <property type="interactions" value="6"/>
</dbReference>
<dbReference type="FunCoup" id="P0ACX9">
    <property type="interactions" value="13"/>
</dbReference>
<dbReference type="IntAct" id="P0ACX9">
    <property type="interactions" value="17"/>
</dbReference>
<dbReference type="STRING" id="511145.b1705"/>
<dbReference type="PaxDb" id="511145-b1705"/>
<dbReference type="EnsemblBacteria" id="AAC74775">
    <property type="protein sequence ID" value="AAC74775"/>
    <property type="gene ID" value="b1705"/>
</dbReference>
<dbReference type="GeneID" id="946205"/>
<dbReference type="KEGG" id="ecj:JW1695"/>
<dbReference type="KEGG" id="eco:b1705"/>
<dbReference type="KEGG" id="ecoc:C3026_09765"/>
<dbReference type="PATRIC" id="fig|1411691.4.peg.552"/>
<dbReference type="EchoBASE" id="EB2292"/>
<dbReference type="eggNOG" id="COG4256">
    <property type="taxonomic scope" value="Bacteria"/>
</dbReference>
<dbReference type="HOGENOM" id="CLU_178563_1_2_6"/>
<dbReference type="InParanoid" id="P0ACX9"/>
<dbReference type="OMA" id="HAGHQER"/>
<dbReference type="OrthoDB" id="6121157at2"/>
<dbReference type="PhylomeDB" id="P0ACX9"/>
<dbReference type="BioCyc" id="EcoCyc:EG12391-MONOMER"/>
<dbReference type="EvolutionaryTrace" id="P0ACX9"/>
<dbReference type="PRO" id="PR:P0ACX9"/>
<dbReference type="Proteomes" id="UP000000625">
    <property type="component" value="Chromosome"/>
</dbReference>
<dbReference type="GO" id="GO:0042803">
    <property type="term" value="F:protein homodimerization activity"/>
    <property type="evidence" value="ECO:0000314"/>
    <property type="project" value="EcoCyc"/>
</dbReference>
<dbReference type="DisProt" id="DP00989"/>
<dbReference type="Gene3D" id="2.10.70.10">
    <property type="entry name" value="Complement Module, domain 1"/>
    <property type="match status" value="1"/>
</dbReference>
<dbReference type="InterPro" id="IPR019600">
    <property type="entry name" value="Hemin_uptake_protein_HemP"/>
</dbReference>
<dbReference type="NCBIfam" id="NF007559">
    <property type="entry name" value="PRK10183.1"/>
    <property type="match status" value="1"/>
</dbReference>
<dbReference type="Pfam" id="PF10636">
    <property type="entry name" value="hemP"/>
    <property type="match status" value="1"/>
</dbReference>
<sequence length="63" mass="7117">MRYTDSRKLTPETDANHKTASPQPIRRISSQTLLGPDGKLIIDHDGQEYLLRKTQAGKLLLTK</sequence>